<dbReference type="EMBL" id="AM889285">
    <property type="protein sequence ID" value="CAP57351.1"/>
    <property type="molecule type" value="Genomic_DNA"/>
</dbReference>
<dbReference type="EMBL" id="CP001189">
    <property type="protein sequence ID" value="ACI52692.1"/>
    <property type="molecule type" value="Genomic_DNA"/>
</dbReference>
<dbReference type="RefSeq" id="WP_003621118.1">
    <property type="nucleotide sequence ID" value="NC_011365.1"/>
</dbReference>
<dbReference type="SMR" id="A9H3R9"/>
<dbReference type="STRING" id="272568.GDI3408"/>
<dbReference type="GeneID" id="98313199"/>
<dbReference type="KEGG" id="gdi:GDI3408"/>
<dbReference type="KEGG" id="gdj:Gdia_2962"/>
<dbReference type="eggNOG" id="COG0048">
    <property type="taxonomic scope" value="Bacteria"/>
</dbReference>
<dbReference type="HOGENOM" id="CLU_104295_1_2_5"/>
<dbReference type="OrthoDB" id="9802366at2"/>
<dbReference type="Proteomes" id="UP000001176">
    <property type="component" value="Chromosome"/>
</dbReference>
<dbReference type="GO" id="GO:0015935">
    <property type="term" value="C:small ribosomal subunit"/>
    <property type="evidence" value="ECO:0007669"/>
    <property type="project" value="InterPro"/>
</dbReference>
<dbReference type="GO" id="GO:0019843">
    <property type="term" value="F:rRNA binding"/>
    <property type="evidence" value="ECO:0007669"/>
    <property type="project" value="UniProtKB-UniRule"/>
</dbReference>
<dbReference type="GO" id="GO:0003735">
    <property type="term" value="F:structural constituent of ribosome"/>
    <property type="evidence" value="ECO:0007669"/>
    <property type="project" value="InterPro"/>
</dbReference>
<dbReference type="GO" id="GO:0000049">
    <property type="term" value="F:tRNA binding"/>
    <property type="evidence" value="ECO:0007669"/>
    <property type="project" value="UniProtKB-UniRule"/>
</dbReference>
<dbReference type="GO" id="GO:0006412">
    <property type="term" value="P:translation"/>
    <property type="evidence" value="ECO:0007669"/>
    <property type="project" value="UniProtKB-UniRule"/>
</dbReference>
<dbReference type="CDD" id="cd03368">
    <property type="entry name" value="Ribosomal_S12"/>
    <property type="match status" value="1"/>
</dbReference>
<dbReference type="FunFam" id="2.40.50.140:FF:000001">
    <property type="entry name" value="30S ribosomal protein S12"/>
    <property type="match status" value="1"/>
</dbReference>
<dbReference type="Gene3D" id="2.40.50.140">
    <property type="entry name" value="Nucleic acid-binding proteins"/>
    <property type="match status" value="1"/>
</dbReference>
<dbReference type="HAMAP" id="MF_00403_B">
    <property type="entry name" value="Ribosomal_uS12_B"/>
    <property type="match status" value="1"/>
</dbReference>
<dbReference type="InterPro" id="IPR012340">
    <property type="entry name" value="NA-bd_OB-fold"/>
</dbReference>
<dbReference type="InterPro" id="IPR006032">
    <property type="entry name" value="Ribosomal_uS12"/>
</dbReference>
<dbReference type="InterPro" id="IPR005679">
    <property type="entry name" value="Ribosomal_uS12_bac"/>
</dbReference>
<dbReference type="NCBIfam" id="TIGR00981">
    <property type="entry name" value="rpsL_bact"/>
    <property type="match status" value="1"/>
</dbReference>
<dbReference type="PANTHER" id="PTHR11652">
    <property type="entry name" value="30S RIBOSOMAL PROTEIN S12 FAMILY MEMBER"/>
    <property type="match status" value="1"/>
</dbReference>
<dbReference type="Pfam" id="PF00164">
    <property type="entry name" value="Ribosom_S12_S23"/>
    <property type="match status" value="1"/>
</dbReference>
<dbReference type="PIRSF" id="PIRSF002133">
    <property type="entry name" value="Ribosomal_S12/S23"/>
    <property type="match status" value="1"/>
</dbReference>
<dbReference type="PRINTS" id="PR01034">
    <property type="entry name" value="RIBOSOMALS12"/>
</dbReference>
<dbReference type="SUPFAM" id="SSF50249">
    <property type="entry name" value="Nucleic acid-binding proteins"/>
    <property type="match status" value="1"/>
</dbReference>
<dbReference type="PROSITE" id="PS00055">
    <property type="entry name" value="RIBOSOMAL_S12"/>
    <property type="match status" value="1"/>
</dbReference>
<comment type="function">
    <text evidence="2">With S4 and S5 plays an important role in translational accuracy.</text>
</comment>
<comment type="function">
    <text evidence="2">Interacts with and stabilizes bases of the 16S rRNA that are involved in tRNA selection in the A site and with the mRNA backbone. Located at the interface of the 30S and 50S subunits, it traverses the body of the 30S subunit contacting proteins on the other side and probably holding the rRNA structure together. The combined cluster of proteins S8, S12 and S17 appears to hold together the shoulder and platform of the 30S subunit.</text>
</comment>
<comment type="subunit">
    <text evidence="2">Part of the 30S ribosomal subunit. Contacts proteins S8 and S17. May interact with IF1 in the 30S initiation complex.</text>
</comment>
<comment type="similarity">
    <text evidence="2">Belongs to the universal ribosomal protein uS12 family.</text>
</comment>
<proteinExistence type="inferred from homology"/>
<feature type="chain" id="PRO_1000080398" description="Small ribosomal subunit protein uS12">
    <location>
        <begin position="1"/>
        <end position="123"/>
    </location>
</feature>
<feature type="modified residue" description="3-methylthioaspartic acid" evidence="1">
    <location>
        <position position="89"/>
    </location>
</feature>
<keyword id="KW-0488">Methylation</keyword>
<keyword id="KW-1185">Reference proteome</keyword>
<keyword id="KW-0687">Ribonucleoprotein</keyword>
<keyword id="KW-0689">Ribosomal protein</keyword>
<keyword id="KW-0694">RNA-binding</keyword>
<keyword id="KW-0699">rRNA-binding</keyword>
<keyword id="KW-0820">tRNA-binding</keyword>
<organism>
    <name type="scientific">Gluconacetobacter diazotrophicus (strain ATCC 49037 / DSM 5601 / CCUG 37298 / CIP 103539 / LMG 7603 / PAl5)</name>
    <dbReference type="NCBI Taxonomy" id="272568"/>
    <lineage>
        <taxon>Bacteria</taxon>
        <taxon>Pseudomonadati</taxon>
        <taxon>Pseudomonadota</taxon>
        <taxon>Alphaproteobacteria</taxon>
        <taxon>Acetobacterales</taxon>
        <taxon>Acetobacteraceae</taxon>
        <taxon>Gluconacetobacter</taxon>
    </lineage>
</organism>
<name>RS12_GLUDA</name>
<evidence type="ECO:0000250" key="1"/>
<evidence type="ECO:0000255" key="2">
    <source>
        <dbReference type="HAMAP-Rule" id="MF_00403"/>
    </source>
</evidence>
<evidence type="ECO:0000305" key="3"/>
<protein>
    <recommendedName>
        <fullName evidence="2">Small ribosomal subunit protein uS12</fullName>
    </recommendedName>
    <alternativeName>
        <fullName evidence="3">30S ribosomal protein S12</fullName>
    </alternativeName>
</protein>
<sequence length="123" mass="13733">MPTINQLIAKGREPAAKRNKVPALQGCPQKRGVCTRVYTTTPKKPNSALRKVAKVRLTNGYEVVSYIPGEGHNLQEHSVVLIRGGRVKDLPGVRYHILRGVLDTQGIAKRRQRRSLYGAKRPK</sequence>
<gene>
    <name evidence="2" type="primary">rpsL</name>
    <name type="ordered locus">GDI3408</name>
    <name type="ordered locus">Gdia_2962</name>
</gene>
<reference key="1">
    <citation type="journal article" date="2009" name="BMC Genomics">
        <title>Complete genome sequence of the sugarcane nitrogen-fixing endophyte Gluconacetobacter diazotrophicus Pal5.</title>
        <authorList>
            <person name="Bertalan M."/>
            <person name="Albano R."/>
            <person name="de Padua V."/>
            <person name="Rouws L."/>
            <person name="Rojas C."/>
            <person name="Hemerly A."/>
            <person name="Teixeira K."/>
            <person name="Schwab S."/>
            <person name="Araujo J."/>
            <person name="Oliveira A."/>
            <person name="Franca L."/>
            <person name="Magalhaes V."/>
            <person name="Alqueres S."/>
            <person name="Cardoso A."/>
            <person name="Almeida W."/>
            <person name="Loureiro M.M."/>
            <person name="Nogueira E."/>
            <person name="Cidade D."/>
            <person name="Oliveira D."/>
            <person name="Simao T."/>
            <person name="Macedo J."/>
            <person name="Valadao A."/>
            <person name="Dreschsel M."/>
            <person name="Freitas F."/>
            <person name="Vidal M."/>
            <person name="Guedes H."/>
            <person name="Rodrigues E."/>
            <person name="Meneses C."/>
            <person name="Brioso P."/>
            <person name="Pozzer L."/>
            <person name="Figueiredo D."/>
            <person name="Montano H."/>
            <person name="Junior J."/>
            <person name="de Souza Filho G."/>
            <person name="Martin Quintana Flores V."/>
            <person name="Ferreira B."/>
            <person name="Branco A."/>
            <person name="Gonzalez P."/>
            <person name="Guillobel H."/>
            <person name="Lemos M."/>
            <person name="Seibel L."/>
            <person name="Macedo J."/>
            <person name="Alves-Ferreira M."/>
            <person name="Sachetto-Martins G."/>
            <person name="Coelho A."/>
            <person name="Santos E."/>
            <person name="Amaral G."/>
            <person name="Neves A."/>
            <person name="Pacheco A.B."/>
            <person name="Carvalho D."/>
            <person name="Lery L."/>
            <person name="Bisch P."/>
            <person name="Rossle S.C."/>
            <person name="Urmenyi T."/>
            <person name="Rael Pereira A."/>
            <person name="Silva R."/>
            <person name="Rondinelli E."/>
            <person name="von Kruger W."/>
            <person name="Martins O."/>
            <person name="Baldani J.I."/>
            <person name="Ferreira P.C."/>
        </authorList>
    </citation>
    <scope>NUCLEOTIDE SEQUENCE [LARGE SCALE GENOMIC DNA]</scope>
    <source>
        <strain>ATCC 49037 / DSM 5601 / CCUG 37298 / CIP 103539 / LMG 7603 / PAl5</strain>
    </source>
</reference>
<reference key="2">
    <citation type="journal article" date="2010" name="Stand. Genomic Sci.">
        <title>Two genome sequences of the same bacterial strain, Gluconacetobacter diazotrophicus PAl 5, suggest a new standard in genome sequence submission.</title>
        <authorList>
            <person name="Giongo A."/>
            <person name="Tyler H.L."/>
            <person name="Zipperer U.N."/>
            <person name="Triplett E.W."/>
        </authorList>
    </citation>
    <scope>NUCLEOTIDE SEQUENCE [LARGE SCALE GENOMIC DNA]</scope>
    <source>
        <strain>ATCC 49037 / DSM 5601 / CCUG 37298 / CIP 103539 / LMG 7603 / PAl5</strain>
    </source>
</reference>
<accession>A9H3R9</accession>
<accession>B5ZIF9</accession>